<geneLocation type="chloroplast"/>
<keyword id="KW-0113">Calvin cycle</keyword>
<keyword id="KW-0120">Carbon dioxide fixation</keyword>
<keyword id="KW-0150">Chloroplast</keyword>
<keyword id="KW-1015">Disulfide bond</keyword>
<keyword id="KW-0456">Lyase</keyword>
<keyword id="KW-0460">Magnesium</keyword>
<keyword id="KW-0479">Metal-binding</keyword>
<keyword id="KW-0488">Methylation</keyword>
<keyword id="KW-0503">Monooxygenase</keyword>
<keyword id="KW-0560">Oxidoreductase</keyword>
<keyword id="KW-0601">Photorespiration</keyword>
<keyword id="KW-0602">Photosynthesis</keyword>
<keyword id="KW-0934">Plastid</keyword>
<accession>P92401</accession>
<evidence type="ECO:0000255" key="1">
    <source>
        <dbReference type="HAMAP-Rule" id="MF_01338"/>
    </source>
</evidence>
<feature type="chain" id="PRO_0000062514" description="Ribulose bisphosphate carboxylase large chain">
    <location>
        <begin position="1" status="less than"/>
        <end position="455" status="greater than"/>
    </location>
</feature>
<feature type="active site" description="Proton acceptor" evidence="1">
    <location>
        <position position="166"/>
    </location>
</feature>
<feature type="active site" description="Proton acceptor" evidence="1">
    <location>
        <position position="285"/>
    </location>
</feature>
<feature type="binding site" description="in homodimeric partner" evidence="1">
    <location>
        <position position="114"/>
    </location>
    <ligand>
        <name>substrate</name>
    </ligand>
</feature>
<feature type="binding site" evidence="1">
    <location>
        <position position="164"/>
    </location>
    <ligand>
        <name>substrate</name>
    </ligand>
</feature>
<feature type="binding site" evidence="1">
    <location>
        <position position="168"/>
    </location>
    <ligand>
        <name>substrate</name>
    </ligand>
</feature>
<feature type="binding site" description="via carbamate group" evidence="1">
    <location>
        <position position="192"/>
    </location>
    <ligand>
        <name>Mg(2+)</name>
        <dbReference type="ChEBI" id="CHEBI:18420"/>
    </ligand>
</feature>
<feature type="binding site" evidence="1">
    <location>
        <position position="194"/>
    </location>
    <ligand>
        <name>Mg(2+)</name>
        <dbReference type="ChEBI" id="CHEBI:18420"/>
    </ligand>
</feature>
<feature type="binding site" evidence="1">
    <location>
        <position position="195"/>
    </location>
    <ligand>
        <name>Mg(2+)</name>
        <dbReference type="ChEBI" id="CHEBI:18420"/>
    </ligand>
</feature>
<feature type="binding site" evidence="1">
    <location>
        <position position="286"/>
    </location>
    <ligand>
        <name>substrate</name>
    </ligand>
</feature>
<feature type="binding site" evidence="1">
    <location>
        <position position="318"/>
    </location>
    <ligand>
        <name>substrate</name>
    </ligand>
</feature>
<feature type="binding site" evidence="1">
    <location>
        <position position="370"/>
    </location>
    <ligand>
        <name>substrate</name>
    </ligand>
</feature>
<feature type="site" description="Transition state stabilizer" evidence="1">
    <location>
        <position position="325"/>
    </location>
</feature>
<feature type="modified residue" description="N6,N6,N6-trimethyllysine" evidence="1">
    <location>
        <position position="5"/>
    </location>
</feature>
<feature type="modified residue" description="N6-carboxylysine" evidence="1">
    <location>
        <position position="192"/>
    </location>
</feature>
<feature type="disulfide bond" description="Interchain; in linked form" evidence="1">
    <location>
        <position position="238"/>
    </location>
</feature>
<feature type="non-terminal residue">
    <location>
        <position position="1"/>
    </location>
</feature>
<feature type="non-terminal residue">
    <location>
        <position position="455"/>
    </location>
</feature>
<organism>
    <name type="scientific">Lupinus microcarpus var. densiflorus</name>
    <name type="common">Whitewhorl lupine</name>
    <name type="synonym">Lupinus densiflorus</name>
    <dbReference type="NCBI Taxonomy" id="61113"/>
    <lineage>
        <taxon>Eukaryota</taxon>
        <taxon>Viridiplantae</taxon>
        <taxon>Streptophyta</taxon>
        <taxon>Embryophyta</taxon>
        <taxon>Tracheophyta</taxon>
        <taxon>Spermatophyta</taxon>
        <taxon>Magnoliopsida</taxon>
        <taxon>eudicotyledons</taxon>
        <taxon>Gunneridae</taxon>
        <taxon>Pentapetalae</taxon>
        <taxon>rosids</taxon>
        <taxon>fabids</taxon>
        <taxon>Fabales</taxon>
        <taxon>Fabaceae</taxon>
        <taxon>Papilionoideae</taxon>
        <taxon>50 kb inversion clade</taxon>
        <taxon>genistoids sensu lato</taxon>
        <taxon>core genistoids</taxon>
        <taxon>Genisteae</taxon>
        <taxon>Lupinus</taxon>
    </lineage>
</organism>
<sequence>SVGFKAGVKDYKLTYYTPDNQTKDTDILAAFRVTPQPGVPPEEAGAAVAAESSTGTWTTVWTDGLTSLDRYKGRCYHIEPVAGEENQFIAYVAYPLDLFEEGSVTNMFTSIVGNVFGFKALRALRLEDLRIPNAYVKTFQGPPHGIQVERDKLNKYGRPLLGCTIKPKLGLSAKNYGRAVYECLRGGLDFTKDDENVNSQPFMRWRDRFLFCAEALYKAQAETGEIKGHYLNATAGTCEEMIKRAVFARELGVPIVMHDYLTGGFTANTSLAHYCRDNGLLLHIHRAMHAVIDRQKNHGMHFRVLAKALRLSGGDHIHSGTVVGKLEGEREITLGFVDLLRDDFVEKDRSRGIYFTQDWVSLPGVLPVASGGIHVWHMPALTEIFGDDSVLQFGGGTLGHPWGNAPGAVANRVALEACVQARNEGRDLASEGNQIIREASKWSPELAAACEVWKE</sequence>
<gene>
    <name evidence="1" type="primary">rbcL</name>
</gene>
<comment type="function">
    <text evidence="1">RuBisCO catalyzes two reactions: the carboxylation of D-ribulose 1,5-bisphosphate, the primary event in carbon dioxide fixation, as well as the oxidative fragmentation of the pentose substrate in the photorespiration process. Both reactions occur simultaneously and in competition at the same active site.</text>
</comment>
<comment type="catalytic activity">
    <reaction evidence="1">
        <text>2 (2R)-3-phosphoglycerate + 2 H(+) = D-ribulose 1,5-bisphosphate + CO2 + H2O</text>
        <dbReference type="Rhea" id="RHEA:23124"/>
        <dbReference type="ChEBI" id="CHEBI:15377"/>
        <dbReference type="ChEBI" id="CHEBI:15378"/>
        <dbReference type="ChEBI" id="CHEBI:16526"/>
        <dbReference type="ChEBI" id="CHEBI:57870"/>
        <dbReference type="ChEBI" id="CHEBI:58272"/>
        <dbReference type="EC" id="4.1.1.39"/>
    </reaction>
</comment>
<comment type="catalytic activity">
    <reaction evidence="1">
        <text>D-ribulose 1,5-bisphosphate + O2 = 2-phosphoglycolate + (2R)-3-phosphoglycerate + 2 H(+)</text>
        <dbReference type="Rhea" id="RHEA:36631"/>
        <dbReference type="ChEBI" id="CHEBI:15378"/>
        <dbReference type="ChEBI" id="CHEBI:15379"/>
        <dbReference type="ChEBI" id="CHEBI:57870"/>
        <dbReference type="ChEBI" id="CHEBI:58033"/>
        <dbReference type="ChEBI" id="CHEBI:58272"/>
    </reaction>
</comment>
<comment type="cofactor">
    <cofactor evidence="1">
        <name>Mg(2+)</name>
        <dbReference type="ChEBI" id="CHEBI:18420"/>
    </cofactor>
    <text evidence="1">Binds 1 Mg(2+) ion per subunit.</text>
</comment>
<comment type="subunit">
    <text evidence="1">Heterohexadecamer of 8 large chains and 8 small chains; disulfide-linked. The disulfide link is formed within the large subunit homodimers.</text>
</comment>
<comment type="subcellular location">
    <subcellularLocation>
        <location>Plastid</location>
        <location>Chloroplast</location>
    </subcellularLocation>
</comment>
<comment type="PTM">
    <text evidence="1">The disulfide bond which can form in the large chain dimeric partners within the hexadecamer appears to be associated with oxidative stress and protein turnover.</text>
</comment>
<comment type="miscellaneous">
    <text evidence="1">The basic functional RuBisCO is composed of a large chain homodimer in a 'head-to-tail' conformation. In form I RuBisCO this homodimer is arranged in a barrel-like tetramer with the small subunits forming a tetrameric 'cap' on each end of the 'barrel'.</text>
</comment>
<comment type="similarity">
    <text evidence="1">Belongs to the RuBisCO large chain family. Type I subfamily.</text>
</comment>
<name>RBL_LUPDE</name>
<dbReference type="EC" id="4.1.1.39" evidence="1"/>
<dbReference type="EMBL" id="Z70062">
    <property type="protein sequence ID" value="CAA93921.1"/>
    <property type="molecule type" value="Genomic_DNA"/>
</dbReference>
<dbReference type="SMR" id="P92401"/>
<dbReference type="GO" id="GO:0009507">
    <property type="term" value="C:chloroplast"/>
    <property type="evidence" value="ECO:0007669"/>
    <property type="project" value="UniProtKB-SubCell"/>
</dbReference>
<dbReference type="GO" id="GO:0000287">
    <property type="term" value="F:magnesium ion binding"/>
    <property type="evidence" value="ECO:0007669"/>
    <property type="project" value="InterPro"/>
</dbReference>
<dbReference type="GO" id="GO:0004497">
    <property type="term" value="F:monooxygenase activity"/>
    <property type="evidence" value="ECO:0007669"/>
    <property type="project" value="UniProtKB-KW"/>
</dbReference>
<dbReference type="GO" id="GO:0016984">
    <property type="term" value="F:ribulose-bisphosphate carboxylase activity"/>
    <property type="evidence" value="ECO:0007669"/>
    <property type="project" value="UniProtKB-EC"/>
</dbReference>
<dbReference type="GO" id="GO:0009853">
    <property type="term" value="P:photorespiration"/>
    <property type="evidence" value="ECO:0007669"/>
    <property type="project" value="UniProtKB-KW"/>
</dbReference>
<dbReference type="GO" id="GO:0019253">
    <property type="term" value="P:reductive pentose-phosphate cycle"/>
    <property type="evidence" value="ECO:0007669"/>
    <property type="project" value="UniProtKB-KW"/>
</dbReference>
<dbReference type="CDD" id="cd08212">
    <property type="entry name" value="RuBisCO_large_I"/>
    <property type="match status" value="1"/>
</dbReference>
<dbReference type="FunFam" id="3.20.20.110:FF:000001">
    <property type="entry name" value="Ribulose bisphosphate carboxylase large chain"/>
    <property type="match status" value="1"/>
</dbReference>
<dbReference type="FunFam" id="3.30.70.150:FF:000001">
    <property type="entry name" value="Ribulose bisphosphate carboxylase large chain"/>
    <property type="match status" value="1"/>
</dbReference>
<dbReference type="Gene3D" id="3.20.20.110">
    <property type="entry name" value="Ribulose bisphosphate carboxylase, large subunit, C-terminal domain"/>
    <property type="match status" value="1"/>
</dbReference>
<dbReference type="Gene3D" id="3.30.70.150">
    <property type="entry name" value="RuBisCO large subunit, N-terminal domain"/>
    <property type="match status" value="1"/>
</dbReference>
<dbReference type="HAMAP" id="MF_01338">
    <property type="entry name" value="RuBisCO_L_type1"/>
    <property type="match status" value="1"/>
</dbReference>
<dbReference type="InterPro" id="IPR033966">
    <property type="entry name" value="RuBisCO"/>
</dbReference>
<dbReference type="InterPro" id="IPR020878">
    <property type="entry name" value="RuBisCo_large_chain_AS"/>
</dbReference>
<dbReference type="InterPro" id="IPR000685">
    <property type="entry name" value="RuBisCO_lsu_C"/>
</dbReference>
<dbReference type="InterPro" id="IPR036376">
    <property type="entry name" value="RuBisCO_lsu_C_sf"/>
</dbReference>
<dbReference type="InterPro" id="IPR017443">
    <property type="entry name" value="RuBisCO_lsu_fd_N"/>
</dbReference>
<dbReference type="InterPro" id="IPR036422">
    <property type="entry name" value="RuBisCO_lsu_N_sf"/>
</dbReference>
<dbReference type="InterPro" id="IPR020888">
    <property type="entry name" value="RuBisCO_lsuI"/>
</dbReference>
<dbReference type="NCBIfam" id="NF003252">
    <property type="entry name" value="PRK04208.1"/>
    <property type="match status" value="1"/>
</dbReference>
<dbReference type="PANTHER" id="PTHR42704">
    <property type="entry name" value="RIBULOSE BISPHOSPHATE CARBOXYLASE"/>
    <property type="match status" value="1"/>
</dbReference>
<dbReference type="PANTHER" id="PTHR42704:SF16">
    <property type="entry name" value="RIBULOSE BISPHOSPHATE CARBOXYLASE LARGE CHAIN"/>
    <property type="match status" value="1"/>
</dbReference>
<dbReference type="Pfam" id="PF00016">
    <property type="entry name" value="RuBisCO_large"/>
    <property type="match status" value="1"/>
</dbReference>
<dbReference type="Pfam" id="PF02788">
    <property type="entry name" value="RuBisCO_large_N"/>
    <property type="match status" value="1"/>
</dbReference>
<dbReference type="SFLD" id="SFLDG01052">
    <property type="entry name" value="RuBisCO"/>
    <property type="match status" value="1"/>
</dbReference>
<dbReference type="SFLD" id="SFLDS00014">
    <property type="entry name" value="RuBisCO"/>
    <property type="match status" value="1"/>
</dbReference>
<dbReference type="SFLD" id="SFLDG00301">
    <property type="entry name" value="RuBisCO-like_proteins"/>
    <property type="match status" value="1"/>
</dbReference>
<dbReference type="SUPFAM" id="SSF51649">
    <property type="entry name" value="RuBisCo, C-terminal domain"/>
    <property type="match status" value="1"/>
</dbReference>
<dbReference type="SUPFAM" id="SSF54966">
    <property type="entry name" value="RuBisCO, large subunit, small (N-terminal) domain"/>
    <property type="match status" value="1"/>
</dbReference>
<dbReference type="PROSITE" id="PS00157">
    <property type="entry name" value="RUBISCO_LARGE"/>
    <property type="match status" value="1"/>
</dbReference>
<reference key="1">
    <citation type="journal article" date="1995" name="Bot. Acta">
        <title>Molecular phylogeny of the Papilionoideae (family Leguminosae): rbcL sequences versus chemical taxonomy.</title>
        <authorList>
            <person name="Kaess E."/>
            <person name="Wink M."/>
        </authorList>
    </citation>
    <scope>NUCLEOTIDE SEQUENCE [GENOMIC DNA]</scope>
    <source>
        <tissue>Leaf</tissue>
    </source>
</reference>
<proteinExistence type="inferred from homology"/>
<protein>
    <recommendedName>
        <fullName evidence="1">Ribulose bisphosphate carboxylase large chain</fullName>
        <shortName evidence="1">RuBisCO large subunit</shortName>
        <ecNumber evidence="1">4.1.1.39</ecNumber>
    </recommendedName>
</protein>